<keyword id="KW-1185">Reference proteome</keyword>
<keyword id="KW-0687">Ribonucleoprotein</keyword>
<keyword id="KW-0689">Ribosomal protein</keyword>
<gene>
    <name evidence="1" type="primary">rpsB</name>
    <name type="ordered locus">Pcar_1921</name>
</gene>
<protein>
    <recommendedName>
        <fullName evidence="1">Small ribosomal subunit protein uS2</fullName>
    </recommendedName>
    <alternativeName>
        <fullName evidence="3">30S ribosomal protein S2</fullName>
    </alternativeName>
</protein>
<evidence type="ECO:0000255" key="1">
    <source>
        <dbReference type="HAMAP-Rule" id="MF_00291"/>
    </source>
</evidence>
<evidence type="ECO:0000256" key="2">
    <source>
        <dbReference type="SAM" id="MobiDB-lite"/>
    </source>
</evidence>
<evidence type="ECO:0000305" key="3"/>
<proteinExistence type="inferred from homology"/>
<accession>Q3A395</accession>
<organism>
    <name type="scientific">Syntrophotalea carbinolica (strain DSM 2380 / NBRC 103641 / GraBd1)</name>
    <name type="common">Pelobacter carbinolicus</name>
    <dbReference type="NCBI Taxonomy" id="338963"/>
    <lineage>
        <taxon>Bacteria</taxon>
        <taxon>Pseudomonadati</taxon>
        <taxon>Thermodesulfobacteriota</taxon>
        <taxon>Desulfuromonadia</taxon>
        <taxon>Desulfuromonadales</taxon>
        <taxon>Syntrophotaleaceae</taxon>
        <taxon>Syntrophotalea</taxon>
    </lineage>
</organism>
<dbReference type="EMBL" id="CP000142">
    <property type="protein sequence ID" value="ABA89162.1"/>
    <property type="molecule type" value="Genomic_DNA"/>
</dbReference>
<dbReference type="RefSeq" id="WP_011341667.1">
    <property type="nucleotide sequence ID" value="NC_007498.2"/>
</dbReference>
<dbReference type="SMR" id="Q3A395"/>
<dbReference type="STRING" id="338963.Pcar_1921"/>
<dbReference type="KEGG" id="pca:Pcar_1921"/>
<dbReference type="eggNOG" id="COG0052">
    <property type="taxonomic scope" value="Bacteria"/>
</dbReference>
<dbReference type="HOGENOM" id="CLU_040318_1_2_7"/>
<dbReference type="OrthoDB" id="9808036at2"/>
<dbReference type="Proteomes" id="UP000002534">
    <property type="component" value="Chromosome"/>
</dbReference>
<dbReference type="GO" id="GO:0022627">
    <property type="term" value="C:cytosolic small ribosomal subunit"/>
    <property type="evidence" value="ECO:0007669"/>
    <property type="project" value="TreeGrafter"/>
</dbReference>
<dbReference type="GO" id="GO:0003735">
    <property type="term" value="F:structural constituent of ribosome"/>
    <property type="evidence" value="ECO:0007669"/>
    <property type="project" value="InterPro"/>
</dbReference>
<dbReference type="GO" id="GO:0006412">
    <property type="term" value="P:translation"/>
    <property type="evidence" value="ECO:0007669"/>
    <property type="project" value="UniProtKB-UniRule"/>
</dbReference>
<dbReference type="CDD" id="cd01425">
    <property type="entry name" value="RPS2"/>
    <property type="match status" value="1"/>
</dbReference>
<dbReference type="FunFam" id="1.10.287.610:FF:000001">
    <property type="entry name" value="30S ribosomal protein S2"/>
    <property type="match status" value="1"/>
</dbReference>
<dbReference type="Gene3D" id="3.40.50.10490">
    <property type="entry name" value="Glucose-6-phosphate isomerase like protein, domain 1"/>
    <property type="match status" value="1"/>
</dbReference>
<dbReference type="Gene3D" id="1.10.287.610">
    <property type="entry name" value="Helix hairpin bin"/>
    <property type="match status" value="1"/>
</dbReference>
<dbReference type="HAMAP" id="MF_00291_B">
    <property type="entry name" value="Ribosomal_uS2_B"/>
    <property type="match status" value="1"/>
</dbReference>
<dbReference type="InterPro" id="IPR001865">
    <property type="entry name" value="Ribosomal_uS2"/>
</dbReference>
<dbReference type="InterPro" id="IPR005706">
    <property type="entry name" value="Ribosomal_uS2_bac/mit/plastid"/>
</dbReference>
<dbReference type="InterPro" id="IPR018130">
    <property type="entry name" value="Ribosomal_uS2_CS"/>
</dbReference>
<dbReference type="InterPro" id="IPR023591">
    <property type="entry name" value="Ribosomal_uS2_flav_dom_sf"/>
</dbReference>
<dbReference type="NCBIfam" id="TIGR01011">
    <property type="entry name" value="rpsB_bact"/>
    <property type="match status" value="1"/>
</dbReference>
<dbReference type="PANTHER" id="PTHR12534">
    <property type="entry name" value="30S RIBOSOMAL PROTEIN S2 PROKARYOTIC AND ORGANELLAR"/>
    <property type="match status" value="1"/>
</dbReference>
<dbReference type="PANTHER" id="PTHR12534:SF0">
    <property type="entry name" value="SMALL RIBOSOMAL SUBUNIT PROTEIN US2M"/>
    <property type="match status" value="1"/>
</dbReference>
<dbReference type="Pfam" id="PF00318">
    <property type="entry name" value="Ribosomal_S2"/>
    <property type="match status" value="1"/>
</dbReference>
<dbReference type="PRINTS" id="PR00395">
    <property type="entry name" value="RIBOSOMALS2"/>
</dbReference>
<dbReference type="SUPFAM" id="SSF52313">
    <property type="entry name" value="Ribosomal protein S2"/>
    <property type="match status" value="1"/>
</dbReference>
<dbReference type="PROSITE" id="PS00962">
    <property type="entry name" value="RIBOSOMAL_S2_1"/>
    <property type="match status" value="1"/>
</dbReference>
<dbReference type="PROSITE" id="PS00963">
    <property type="entry name" value="RIBOSOMAL_S2_2"/>
    <property type="match status" value="1"/>
</dbReference>
<reference key="1">
    <citation type="submission" date="2005-10" db="EMBL/GenBank/DDBJ databases">
        <title>Complete sequence of Pelobacter carbinolicus DSM 2380.</title>
        <authorList>
            <person name="Copeland A."/>
            <person name="Lucas S."/>
            <person name="Lapidus A."/>
            <person name="Barry K."/>
            <person name="Detter J.C."/>
            <person name="Glavina T."/>
            <person name="Hammon N."/>
            <person name="Israni S."/>
            <person name="Pitluck S."/>
            <person name="Chertkov O."/>
            <person name="Schmutz J."/>
            <person name="Larimer F."/>
            <person name="Land M."/>
            <person name="Kyrpides N."/>
            <person name="Ivanova N."/>
            <person name="Richardson P."/>
        </authorList>
    </citation>
    <scope>NUCLEOTIDE SEQUENCE [LARGE SCALE GENOMIC DNA]</scope>
    <source>
        <strain>DSM 2380 / NBRC 103641 / GraBd1</strain>
    </source>
</reference>
<name>RS2_SYNC1</name>
<comment type="similarity">
    <text evidence="1">Belongs to the universal ribosomal protein uS2 family.</text>
</comment>
<feature type="chain" id="PRO_1000004017" description="Small ribosomal subunit protein uS2">
    <location>
        <begin position="1"/>
        <end position="267"/>
    </location>
</feature>
<feature type="region of interest" description="Disordered" evidence="2">
    <location>
        <begin position="233"/>
        <end position="267"/>
    </location>
</feature>
<feature type="compositionally biased region" description="Basic and acidic residues" evidence="2">
    <location>
        <begin position="233"/>
        <end position="250"/>
    </location>
</feature>
<feature type="compositionally biased region" description="Low complexity" evidence="2">
    <location>
        <begin position="251"/>
        <end position="261"/>
    </location>
</feature>
<sequence length="267" mass="29750">MAQVSMKQLLEAGVHFGHQTKRWNPKMKPYIFGARNGIYIIDLQKTVRYFKSAYQFIRETVQNGDKVLFVGTKKQAQEAIREETARADQFYIDNRWLGGMLTNFATIKKSIERLKKIEVMAQDGTYELLTKKEALNLEREREKLEKTLGGIKGMNKLPGAIFVIDPKKETIAVKEARKLGIPVVAVVDTNCDPDDIDYIIPGNDDAIRAIRLFAAKMADACIDGAQAREAAIRAESDKAETDKVEVEGKGEAPAAEAAEVVESADKA</sequence>